<organism>
    <name type="scientific">Rhodopseudomonas palustris (strain ATCC BAA-98 / CGA009)</name>
    <dbReference type="NCBI Taxonomy" id="258594"/>
    <lineage>
        <taxon>Bacteria</taxon>
        <taxon>Pseudomonadati</taxon>
        <taxon>Pseudomonadota</taxon>
        <taxon>Alphaproteobacteria</taxon>
        <taxon>Hyphomicrobiales</taxon>
        <taxon>Nitrobacteraceae</taxon>
        <taxon>Rhodopseudomonas</taxon>
    </lineage>
</organism>
<reference key="1">
    <citation type="journal article" date="2004" name="Nat. Biotechnol.">
        <title>Complete genome sequence of the metabolically versatile photosynthetic bacterium Rhodopseudomonas palustris.</title>
        <authorList>
            <person name="Larimer F.W."/>
            <person name="Chain P."/>
            <person name="Hauser L."/>
            <person name="Lamerdin J.E."/>
            <person name="Malfatti S."/>
            <person name="Do L."/>
            <person name="Land M.L."/>
            <person name="Pelletier D.A."/>
            <person name="Beatty J.T."/>
            <person name="Lang A.S."/>
            <person name="Tabita F.R."/>
            <person name="Gibson J.L."/>
            <person name="Hanson T.E."/>
            <person name="Bobst C."/>
            <person name="Torres y Torres J.L."/>
            <person name="Peres C."/>
            <person name="Harrison F.H."/>
            <person name="Gibson J."/>
            <person name="Harwood C.S."/>
        </authorList>
    </citation>
    <scope>NUCLEOTIDE SEQUENCE [LARGE SCALE GENOMIC DNA]</scope>
    <source>
        <strain>ATCC BAA-98 / CGA009</strain>
    </source>
</reference>
<name>PLSY_RHOPA</name>
<accession>P60929</accession>
<feature type="chain" id="PRO_0000188438" description="Glycerol-3-phosphate acyltransferase">
    <location>
        <begin position="1"/>
        <end position="203"/>
    </location>
</feature>
<feature type="transmembrane region" description="Helical" evidence="1">
    <location>
        <begin position="5"/>
        <end position="25"/>
    </location>
</feature>
<feature type="transmembrane region" description="Helical" evidence="1">
    <location>
        <begin position="55"/>
        <end position="75"/>
    </location>
</feature>
<feature type="transmembrane region" description="Helical" evidence="1">
    <location>
        <begin position="84"/>
        <end position="104"/>
    </location>
</feature>
<feature type="transmembrane region" description="Helical" evidence="1">
    <location>
        <begin position="118"/>
        <end position="138"/>
    </location>
</feature>
<feature type="transmembrane region" description="Helical" evidence="1">
    <location>
        <begin position="159"/>
        <end position="179"/>
    </location>
</feature>
<evidence type="ECO:0000255" key="1">
    <source>
        <dbReference type="HAMAP-Rule" id="MF_01043"/>
    </source>
</evidence>
<protein>
    <recommendedName>
        <fullName evidence="1">Glycerol-3-phosphate acyltransferase</fullName>
    </recommendedName>
    <alternativeName>
        <fullName evidence="1">Acyl-PO4 G3P acyltransferase</fullName>
    </alternativeName>
    <alternativeName>
        <fullName evidence="1">Acyl-phosphate--glycerol-3-phosphate acyltransferase</fullName>
    </alternativeName>
    <alternativeName>
        <fullName evidence="1">G3P acyltransferase</fullName>
        <shortName evidence="1">GPAT</shortName>
        <ecNumber evidence="1">2.3.1.275</ecNumber>
    </alternativeName>
    <alternativeName>
        <fullName evidence="1">Lysophosphatidic acid synthase</fullName>
        <shortName evidence="1">LPA synthase</shortName>
    </alternativeName>
</protein>
<sequence>MMIGIYIAALVIGYLFGSIPFGLILTKIAGTQDLRSIGSGNIGATNVLRTGRKGLAAATLLLDALKGTAAVIVAAYLASGTDAIAANAAMLAALGAFLGHLFPVWLKFKGGKGVAVYIGVLIGLFWPAAVVFCIMWLATAFTSRYSSLSALVASFVTPIFLWWFGHDSLASLFAVLTLLLFWMHRENIKRLQAGTESKIGQKK</sequence>
<proteinExistence type="inferred from homology"/>
<gene>
    <name evidence="1" type="primary">plsY</name>
    <name type="ordered locus">RPA3119</name>
</gene>
<dbReference type="EC" id="2.3.1.275" evidence="1"/>
<dbReference type="EMBL" id="BX572603">
    <property type="protein sequence ID" value="CAE28560.1"/>
    <property type="molecule type" value="Genomic_DNA"/>
</dbReference>
<dbReference type="RefSeq" id="WP_011158664.1">
    <property type="nucleotide sequence ID" value="NZ_CP116810.1"/>
</dbReference>
<dbReference type="SMR" id="P60929"/>
<dbReference type="STRING" id="258594.RPA3119"/>
<dbReference type="GeneID" id="66894201"/>
<dbReference type="eggNOG" id="COG0344">
    <property type="taxonomic scope" value="Bacteria"/>
</dbReference>
<dbReference type="HOGENOM" id="CLU_081254_1_0_5"/>
<dbReference type="PhylomeDB" id="P60929"/>
<dbReference type="UniPathway" id="UPA00085"/>
<dbReference type="GO" id="GO:0005886">
    <property type="term" value="C:plasma membrane"/>
    <property type="evidence" value="ECO:0007669"/>
    <property type="project" value="UniProtKB-SubCell"/>
</dbReference>
<dbReference type="GO" id="GO:0043772">
    <property type="term" value="F:acyl-phosphate glycerol-3-phosphate acyltransferase activity"/>
    <property type="evidence" value="ECO:0007669"/>
    <property type="project" value="UniProtKB-UniRule"/>
</dbReference>
<dbReference type="GO" id="GO:0008654">
    <property type="term" value="P:phospholipid biosynthetic process"/>
    <property type="evidence" value="ECO:0007669"/>
    <property type="project" value="UniProtKB-UniRule"/>
</dbReference>
<dbReference type="HAMAP" id="MF_01043">
    <property type="entry name" value="PlsY"/>
    <property type="match status" value="1"/>
</dbReference>
<dbReference type="InterPro" id="IPR003811">
    <property type="entry name" value="G3P_acylTferase_PlsY"/>
</dbReference>
<dbReference type="NCBIfam" id="TIGR00023">
    <property type="entry name" value="glycerol-3-phosphate 1-O-acyltransferase PlsY"/>
    <property type="match status" value="1"/>
</dbReference>
<dbReference type="PANTHER" id="PTHR30309:SF0">
    <property type="entry name" value="GLYCEROL-3-PHOSPHATE ACYLTRANSFERASE-RELATED"/>
    <property type="match status" value="1"/>
</dbReference>
<dbReference type="PANTHER" id="PTHR30309">
    <property type="entry name" value="INNER MEMBRANE PROTEIN YGIH"/>
    <property type="match status" value="1"/>
</dbReference>
<dbReference type="Pfam" id="PF02660">
    <property type="entry name" value="G3P_acyltransf"/>
    <property type="match status" value="1"/>
</dbReference>
<dbReference type="SMART" id="SM01207">
    <property type="entry name" value="G3P_acyltransf"/>
    <property type="match status" value="1"/>
</dbReference>
<keyword id="KW-0997">Cell inner membrane</keyword>
<keyword id="KW-1003">Cell membrane</keyword>
<keyword id="KW-0444">Lipid biosynthesis</keyword>
<keyword id="KW-0443">Lipid metabolism</keyword>
<keyword id="KW-0472">Membrane</keyword>
<keyword id="KW-0594">Phospholipid biosynthesis</keyword>
<keyword id="KW-1208">Phospholipid metabolism</keyword>
<keyword id="KW-0808">Transferase</keyword>
<keyword id="KW-0812">Transmembrane</keyword>
<keyword id="KW-1133">Transmembrane helix</keyword>
<comment type="function">
    <text evidence="1">Catalyzes the transfer of an acyl group from acyl-phosphate (acyl-PO(4)) to glycerol-3-phosphate (G3P) to form lysophosphatidic acid (LPA). This enzyme utilizes acyl-phosphate as fatty acyl donor, but not acyl-CoA or acyl-ACP.</text>
</comment>
<comment type="catalytic activity">
    <reaction evidence="1">
        <text>an acyl phosphate + sn-glycerol 3-phosphate = a 1-acyl-sn-glycero-3-phosphate + phosphate</text>
        <dbReference type="Rhea" id="RHEA:34075"/>
        <dbReference type="ChEBI" id="CHEBI:43474"/>
        <dbReference type="ChEBI" id="CHEBI:57597"/>
        <dbReference type="ChEBI" id="CHEBI:57970"/>
        <dbReference type="ChEBI" id="CHEBI:59918"/>
        <dbReference type="EC" id="2.3.1.275"/>
    </reaction>
</comment>
<comment type="pathway">
    <text evidence="1">Lipid metabolism; phospholipid metabolism.</text>
</comment>
<comment type="subunit">
    <text evidence="1">Probably interacts with PlsX.</text>
</comment>
<comment type="subcellular location">
    <subcellularLocation>
        <location evidence="1">Cell inner membrane</location>
        <topology evidence="1">Multi-pass membrane protein</topology>
    </subcellularLocation>
</comment>
<comment type="similarity">
    <text evidence="1">Belongs to the PlsY family.</text>
</comment>